<proteinExistence type="evidence at protein level"/>
<accession>P27809</accession>
<accession>D6VTA6</accession>
<dbReference type="EC" id="2.4.1.-"/>
<dbReference type="EMBL" id="M81110">
    <property type="protein sequence ID" value="AAA34784.1"/>
    <property type="molecule type" value="Genomic_DNA"/>
</dbReference>
<dbReference type="EMBL" id="X62647">
    <property type="protein sequence ID" value="CAA44516.1"/>
    <property type="molecule type" value="Genomic_DNA"/>
</dbReference>
<dbReference type="EMBL" id="U33050">
    <property type="protein sequence ID" value="AAB64906.1"/>
    <property type="molecule type" value="Genomic_DNA"/>
</dbReference>
<dbReference type="EMBL" id="Z29988">
    <property type="protein sequence ID" value="CAA82879.1"/>
    <property type="molecule type" value="Genomic_DNA"/>
</dbReference>
<dbReference type="EMBL" id="BK006938">
    <property type="protein sequence ID" value="DAA12316.1"/>
    <property type="molecule type" value="Genomic_DNA"/>
</dbReference>
<dbReference type="PIR" id="S32592">
    <property type="entry name" value="S32592"/>
</dbReference>
<dbReference type="RefSeq" id="NP_010771.1">
    <property type="nucleotide sequence ID" value="NM_001180791.1"/>
</dbReference>
<dbReference type="PDB" id="1S4N">
    <property type="method" value="X-ray"/>
    <property type="resolution" value="2.01 A"/>
    <property type="chains" value="A/B=97-442"/>
</dbReference>
<dbReference type="PDB" id="1S4O">
    <property type="method" value="X-ray"/>
    <property type="resolution" value="2.01 A"/>
    <property type="chains" value="A/B=97-442"/>
</dbReference>
<dbReference type="PDB" id="1S4P">
    <property type="method" value="X-ray"/>
    <property type="resolution" value="2.01 A"/>
    <property type="chains" value="A/B=97-442"/>
</dbReference>
<dbReference type="PDBsum" id="1S4N"/>
<dbReference type="PDBsum" id="1S4O"/>
<dbReference type="PDBsum" id="1S4P"/>
<dbReference type="SMR" id="P27809"/>
<dbReference type="BioGRID" id="32535">
    <property type="interactions" value="70"/>
</dbReference>
<dbReference type="DIP" id="DIP-5373N"/>
<dbReference type="FunCoup" id="P27809">
    <property type="interactions" value="160"/>
</dbReference>
<dbReference type="IntAct" id="P27809">
    <property type="interactions" value="12"/>
</dbReference>
<dbReference type="STRING" id="4932.YDR483W"/>
<dbReference type="CAZy" id="GT15">
    <property type="family name" value="Glycosyltransferase Family 15"/>
</dbReference>
<dbReference type="GlyCosmos" id="P27809">
    <property type="glycosylation" value="1 site, No reported glycans"/>
</dbReference>
<dbReference type="GlyGen" id="P27809">
    <property type="glycosylation" value="1 site"/>
</dbReference>
<dbReference type="iPTMnet" id="P27809"/>
<dbReference type="PaxDb" id="4932-YDR483W"/>
<dbReference type="PeptideAtlas" id="P27809"/>
<dbReference type="EnsemblFungi" id="YDR483W_mRNA">
    <property type="protein sequence ID" value="YDR483W"/>
    <property type="gene ID" value="YDR483W"/>
</dbReference>
<dbReference type="GeneID" id="852094"/>
<dbReference type="KEGG" id="sce:YDR483W"/>
<dbReference type="AGR" id="SGD:S000002891"/>
<dbReference type="SGD" id="S000002891">
    <property type="gene designation" value="KRE2"/>
</dbReference>
<dbReference type="VEuPathDB" id="FungiDB:YDR483W"/>
<dbReference type="eggNOG" id="KOG4472">
    <property type="taxonomic scope" value="Eukaryota"/>
</dbReference>
<dbReference type="GeneTree" id="ENSGT00940000176287"/>
<dbReference type="HOGENOM" id="CLU_024327_1_0_1"/>
<dbReference type="InParanoid" id="P27809"/>
<dbReference type="OMA" id="YTQCPLN"/>
<dbReference type="OrthoDB" id="439943at2759"/>
<dbReference type="BioCyc" id="MetaCyc:G3O-30008-MONOMER"/>
<dbReference type="BioCyc" id="YEAST:G3O-30008-MONOMER"/>
<dbReference type="UniPathway" id="UPA00378"/>
<dbReference type="BioGRID-ORCS" id="852094">
    <property type="hits" value="6 hits in 10 CRISPR screens"/>
</dbReference>
<dbReference type="EvolutionaryTrace" id="P27809"/>
<dbReference type="PRO" id="PR:P27809"/>
<dbReference type="Proteomes" id="UP000002311">
    <property type="component" value="Chromosome IV"/>
</dbReference>
<dbReference type="RNAct" id="P27809">
    <property type="molecule type" value="protein"/>
</dbReference>
<dbReference type="GO" id="GO:0000329">
    <property type="term" value="C:fungal-type vacuole membrane"/>
    <property type="evidence" value="ECO:0007005"/>
    <property type="project" value="SGD"/>
</dbReference>
<dbReference type="GO" id="GO:0005794">
    <property type="term" value="C:Golgi apparatus"/>
    <property type="evidence" value="ECO:0000314"/>
    <property type="project" value="SGD"/>
</dbReference>
<dbReference type="GO" id="GO:0005797">
    <property type="term" value="C:Golgi medial cisterna"/>
    <property type="evidence" value="ECO:0000314"/>
    <property type="project" value="CACAO"/>
</dbReference>
<dbReference type="GO" id="GO:0000139">
    <property type="term" value="C:Golgi membrane"/>
    <property type="evidence" value="ECO:0007669"/>
    <property type="project" value="UniProtKB-SubCell"/>
</dbReference>
<dbReference type="GO" id="GO:0000026">
    <property type="term" value="F:alpha-1,2-mannosyltransferase activity"/>
    <property type="evidence" value="ECO:0000314"/>
    <property type="project" value="SGD"/>
</dbReference>
<dbReference type="GO" id="GO:0000032">
    <property type="term" value="P:cell wall mannoprotein biosynthetic process"/>
    <property type="evidence" value="ECO:0000315"/>
    <property type="project" value="SGD"/>
</dbReference>
<dbReference type="GO" id="GO:0006491">
    <property type="term" value="P:N-glycan processing"/>
    <property type="evidence" value="ECO:0000315"/>
    <property type="project" value="SGD"/>
</dbReference>
<dbReference type="GO" id="GO:0006487">
    <property type="term" value="P:protein N-linked glycosylation"/>
    <property type="evidence" value="ECO:0000318"/>
    <property type="project" value="GO_Central"/>
</dbReference>
<dbReference type="GO" id="GO:0006493">
    <property type="term" value="P:protein O-linked glycosylation"/>
    <property type="evidence" value="ECO:0000315"/>
    <property type="project" value="SGD"/>
</dbReference>
<dbReference type="FunFam" id="3.90.550.10:FF:000051">
    <property type="entry name" value="Alpha-1,2-mannosyltransferase (Ktr4)"/>
    <property type="match status" value="1"/>
</dbReference>
<dbReference type="Gene3D" id="3.90.550.10">
    <property type="entry name" value="Spore Coat Polysaccharide Biosynthesis Protein SpsA, Chain A"/>
    <property type="match status" value="1"/>
</dbReference>
<dbReference type="InterPro" id="IPR002685">
    <property type="entry name" value="Glyco_trans_15"/>
</dbReference>
<dbReference type="InterPro" id="IPR029044">
    <property type="entry name" value="Nucleotide-diphossugar_trans"/>
</dbReference>
<dbReference type="PANTHER" id="PTHR31121">
    <property type="entry name" value="ALPHA-1,2 MANNOSYLTRANSFERASE KTR1"/>
    <property type="match status" value="1"/>
</dbReference>
<dbReference type="PANTHER" id="PTHR31121:SF8">
    <property type="entry name" value="GLYCOLIPID 2-ALPHA-MANNOSYLTRANSFERASE-RELATED"/>
    <property type="match status" value="1"/>
</dbReference>
<dbReference type="Pfam" id="PF01793">
    <property type="entry name" value="Glyco_transf_15"/>
    <property type="match status" value="1"/>
</dbReference>
<dbReference type="PIRSF" id="PIRSF018153">
    <property type="entry name" value="Glyco_trans_15"/>
    <property type="match status" value="1"/>
</dbReference>
<dbReference type="SUPFAM" id="SSF53448">
    <property type="entry name" value="Nucleotide-diphospho-sugar transferases"/>
    <property type="match status" value="1"/>
</dbReference>
<protein>
    <recommendedName>
        <fullName>Glycolipid 2-alpha-mannosyltransferase</fullName>
        <ecNumber>2.4.1.-</ecNumber>
    </recommendedName>
    <alternativeName>
        <fullName>Alpha-1,2-mannosyltransferase</fullName>
    </alternativeName>
</protein>
<keyword id="KW-0002">3D-structure</keyword>
<keyword id="KW-0903">Direct protein sequencing</keyword>
<keyword id="KW-0325">Glycoprotein</keyword>
<keyword id="KW-0328">Glycosyltransferase</keyword>
<keyword id="KW-0333">Golgi apparatus</keyword>
<keyword id="KW-0464">Manganese</keyword>
<keyword id="KW-0472">Membrane</keyword>
<keyword id="KW-1185">Reference proteome</keyword>
<keyword id="KW-0735">Signal-anchor</keyword>
<keyword id="KW-0808">Transferase</keyword>
<keyword id="KW-0812">Transmembrane</keyword>
<keyword id="KW-1133">Transmembrane helix</keyword>
<reference key="1">
    <citation type="journal article" date="1992" name="Glycobiology">
        <title>Glycosylation in Saccharomyces cerevisiae: cloning and characterization of an alpha-1,2-mannosyltransferase structural gene.</title>
        <authorList>
            <person name="Haeusler A."/>
            <person name="Robbins P.W."/>
        </authorList>
    </citation>
    <scope>NUCLEOTIDE SEQUENCE [GENOMIC DNA]</scope>
    <scope>PARTIAL PROTEIN SEQUENCE</scope>
    <scope>GLYCOSYLATION AT ASN-197</scope>
</reference>
<reference key="2">
    <citation type="journal article" date="1992" name="Genetics">
        <title>Yeast KRE2 defines a new gene family encoding probable secretory proteins, and is required for the correct N-glycosylation of proteins.</title>
        <authorList>
            <person name="Hill K."/>
            <person name="Boone C."/>
            <person name="Goebl M."/>
            <person name="Puccia R."/>
            <person name="Sdicu A.-M."/>
            <person name="Bussey H."/>
        </authorList>
    </citation>
    <scope>NUCLEOTIDE SEQUENCE [GENOMIC DNA]</scope>
</reference>
<reference key="3">
    <citation type="journal article" date="1997" name="Nature">
        <title>The nucleotide sequence of Saccharomyces cerevisiae chromosome IV.</title>
        <authorList>
            <person name="Jacq C."/>
            <person name="Alt-Moerbe J."/>
            <person name="Andre B."/>
            <person name="Arnold W."/>
            <person name="Bahr A."/>
            <person name="Ballesta J.P.G."/>
            <person name="Bargues M."/>
            <person name="Baron L."/>
            <person name="Becker A."/>
            <person name="Biteau N."/>
            <person name="Bloecker H."/>
            <person name="Blugeon C."/>
            <person name="Boskovic J."/>
            <person name="Brandt P."/>
            <person name="Brueckner M."/>
            <person name="Buitrago M.J."/>
            <person name="Coster F."/>
            <person name="Delaveau T."/>
            <person name="del Rey F."/>
            <person name="Dujon B."/>
            <person name="Eide L.G."/>
            <person name="Garcia-Cantalejo J.M."/>
            <person name="Goffeau A."/>
            <person name="Gomez-Peris A."/>
            <person name="Granotier C."/>
            <person name="Hanemann V."/>
            <person name="Hankeln T."/>
            <person name="Hoheisel J.D."/>
            <person name="Jaeger W."/>
            <person name="Jimenez A."/>
            <person name="Jonniaux J.-L."/>
            <person name="Kraemer C."/>
            <person name="Kuester H."/>
            <person name="Laamanen P."/>
            <person name="Legros Y."/>
            <person name="Louis E.J."/>
            <person name="Moeller-Rieker S."/>
            <person name="Monnet A."/>
            <person name="Moro M."/>
            <person name="Mueller-Auer S."/>
            <person name="Nussbaumer B."/>
            <person name="Paricio N."/>
            <person name="Paulin L."/>
            <person name="Perea J."/>
            <person name="Perez-Alonso M."/>
            <person name="Perez-Ortin J.E."/>
            <person name="Pohl T.M."/>
            <person name="Prydz H."/>
            <person name="Purnelle B."/>
            <person name="Rasmussen S.W."/>
            <person name="Remacha M.A."/>
            <person name="Revuelta J.L."/>
            <person name="Rieger M."/>
            <person name="Salom D."/>
            <person name="Saluz H.P."/>
            <person name="Saiz J.E."/>
            <person name="Saren A.-M."/>
            <person name="Schaefer M."/>
            <person name="Scharfe M."/>
            <person name="Schmidt E.R."/>
            <person name="Schneider C."/>
            <person name="Scholler P."/>
            <person name="Schwarz S."/>
            <person name="Soler-Mira A."/>
            <person name="Urrestarazu L.A."/>
            <person name="Verhasselt P."/>
            <person name="Vissers S."/>
            <person name="Voet M."/>
            <person name="Volckaert G."/>
            <person name="Wagner G."/>
            <person name="Wambutt R."/>
            <person name="Wedler E."/>
            <person name="Wedler H."/>
            <person name="Woelfl S."/>
            <person name="Harris D.E."/>
            <person name="Bowman S."/>
            <person name="Brown D."/>
            <person name="Churcher C.M."/>
            <person name="Connor R."/>
            <person name="Dedman K."/>
            <person name="Gentles S."/>
            <person name="Hamlin N."/>
            <person name="Hunt S."/>
            <person name="Jones L."/>
            <person name="McDonald S."/>
            <person name="Murphy L.D."/>
            <person name="Niblett D."/>
            <person name="Odell C."/>
            <person name="Oliver K."/>
            <person name="Rajandream M.A."/>
            <person name="Richards C."/>
            <person name="Shore L."/>
            <person name="Walsh S.V."/>
            <person name="Barrell B.G."/>
            <person name="Dietrich F.S."/>
            <person name="Mulligan J.T."/>
            <person name="Allen E."/>
            <person name="Araujo R."/>
            <person name="Aviles E."/>
            <person name="Berno A."/>
            <person name="Carpenter J."/>
            <person name="Chen E."/>
            <person name="Cherry J.M."/>
            <person name="Chung E."/>
            <person name="Duncan M."/>
            <person name="Hunicke-Smith S."/>
            <person name="Hyman R.W."/>
            <person name="Komp C."/>
            <person name="Lashkari D."/>
            <person name="Lew H."/>
            <person name="Lin D."/>
            <person name="Mosedale D."/>
            <person name="Nakahara K."/>
            <person name="Namath A."/>
            <person name="Oefner P."/>
            <person name="Oh C."/>
            <person name="Petel F.X."/>
            <person name="Roberts D."/>
            <person name="Schramm S."/>
            <person name="Schroeder M."/>
            <person name="Shogren T."/>
            <person name="Shroff N."/>
            <person name="Winant A."/>
            <person name="Yelton M.A."/>
            <person name="Botstein D."/>
            <person name="Davis R.W."/>
            <person name="Johnston M."/>
            <person name="Andrews S."/>
            <person name="Brinkman R."/>
            <person name="Cooper J."/>
            <person name="Ding H."/>
            <person name="Du Z."/>
            <person name="Favello A."/>
            <person name="Fulton L."/>
            <person name="Gattung S."/>
            <person name="Greco T."/>
            <person name="Hallsworth K."/>
            <person name="Hawkins J."/>
            <person name="Hillier L.W."/>
            <person name="Jier M."/>
            <person name="Johnson D."/>
            <person name="Johnston L."/>
            <person name="Kirsten J."/>
            <person name="Kucaba T."/>
            <person name="Langston Y."/>
            <person name="Latreille P."/>
            <person name="Le T."/>
            <person name="Mardis E."/>
            <person name="Menezes S."/>
            <person name="Miller N."/>
            <person name="Nhan M."/>
            <person name="Pauley A."/>
            <person name="Peluso D."/>
            <person name="Rifkin L."/>
            <person name="Riles L."/>
            <person name="Taich A."/>
            <person name="Trevaskis E."/>
            <person name="Vignati D."/>
            <person name="Wilcox L."/>
            <person name="Wohldman P."/>
            <person name="Vaudin M."/>
            <person name="Wilson R."/>
            <person name="Waterston R."/>
            <person name="Albermann K."/>
            <person name="Hani J."/>
            <person name="Heumann K."/>
            <person name="Kleine K."/>
            <person name="Mewes H.-W."/>
            <person name="Zollner A."/>
            <person name="Zaccaria P."/>
        </authorList>
    </citation>
    <scope>NUCLEOTIDE SEQUENCE [LARGE SCALE GENOMIC DNA]</scope>
    <source>
        <strain>ATCC 204508 / S288c</strain>
    </source>
</reference>
<reference key="4">
    <citation type="journal article" date="2014" name="G3 (Bethesda)">
        <title>The reference genome sequence of Saccharomyces cerevisiae: Then and now.</title>
        <authorList>
            <person name="Engel S.R."/>
            <person name="Dietrich F.S."/>
            <person name="Fisk D.G."/>
            <person name="Binkley G."/>
            <person name="Balakrishnan R."/>
            <person name="Costanzo M.C."/>
            <person name="Dwight S.S."/>
            <person name="Hitz B.C."/>
            <person name="Karra K."/>
            <person name="Nash R.S."/>
            <person name="Weng S."/>
            <person name="Wong E.D."/>
            <person name="Lloyd P."/>
            <person name="Skrzypek M.S."/>
            <person name="Miyasato S.R."/>
            <person name="Simison M."/>
            <person name="Cherry J.M."/>
        </authorList>
    </citation>
    <scope>GENOME REANNOTATION</scope>
    <source>
        <strain>ATCC 204508 / S288c</strain>
    </source>
</reference>
<reference key="5">
    <citation type="journal article" date="1994" name="Yeast">
        <title>Nucleotide sequence of the SAC2 gene of Saccharomyces cerevisiae.</title>
        <authorList>
            <person name="Koelling R."/>
            <person name="Lee A."/>
            <person name="Chen E.Y."/>
            <person name="Botstein D."/>
        </authorList>
    </citation>
    <scope>NUCLEOTIDE SEQUENCE [GENOMIC DNA] OF 101-442</scope>
    <source>
        <strain>ATCC 204508 / S288c</strain>
    </source>
</reference>
<reference key="6">
    <citation type="journal article" date="2003" name="Nature">
        <title>Global analysis of protein expression in yeast.</title>
        <authorList>
            <person name="Ghaemmaghami S."/>
            <person name="Huh W.-K."/>
            <person name="Bower K."/>
            <person name="Howson R.W."/>
            <person name="Belle A."/>
            <person name="Dephoure N."/>
            <person name="O'Shea E.K."/>
            <person name="Weissman J.S."/>
        </authorList>
    </citation>
    <scope>LEVEL OF PROTEIN EXPRESSION [LARGE SCALE ANALYSIS]</scope>
</reference>
<sequence>MALFLSKRLLRFTVIAGAVIVLLLTLNSNSRTQQYIPSSISAAFDFTSGSISPEQQVISEENDAKKLEQSALNSEASEDSEAMDEESKALKAAAEKADAPIDTKTTMDYITPSFANKAGKPKACYVTLVRNKELKGLLSSIKYVENKINKKFPYPWVFLNDEPFTEEFKEAVTKAVSSEVKFGILPKEHWSYPEWINQTKAAEIRADAATKYIYGGSESYRHMCRYQSGFFWRHELLEEYDWYWRVEPDIKLYCDINYDVFKWMQENEKVYGFTVSIHEYEVTIPTLWQTSMDFIKKNPEYLDENNLMSFLSNDNGKTYNLCHFWSNFEIANLNLWRSPAYREYFDTLDHQGGFFYERWGDAPVHSIAAALFLPKDKIHYFSDIGYHHPPYDNCPLDKEVYNSNNCECDQGNDFTFQGYSCGKEYYDAQGLVKPKNWKKFRE</sequence>
<name>KRE2_YEAST</name>
<gene>
    <name type="primary">KRE2</name>
    <name type="synonym">MNT1</name>
    <name type="ordered locus">YDR483W</name>
    <name type="ORF">D8035.26</name>
</gene>
<organism>
    <name type="scientific">Saccharomyces cerevisiae (strain ATCC 204508 / S288c)</name>
    <name type="common">Baker's yeast</name>
    <dbReference type="NCBI Taxonomy" id="559292"/>
    <lineage>
        <taxon>Eukaryota</taxon>
        <taxon>Fungi</taxon>
        <taxon>Dikarya</taxon>
        <taxon>Ascomycota</taxon>
        <taxon>Saccharomycotina</taxon>
        <taxon>Saccharomycetes</taxon>
        <taxon>Saccharomycetales</taxon>
        <taxon>Saccharomycetaceae</taxon>
        <taxon>Saccharomyces</taxon>
    </lineage>
</organism>
<evidence type="ECO:0000255" key="1"/>
<evidence type="ECO:0000256" key="2">
    <source>
        <dbReference type="SAM" id="MobiDB-lite"/>
    </source>
</evidence>
<evidence type="ECO:0000269" key="3">
    <source>
    </source>
</evidence>
<evidence type="ECO:0000269" key="4">
    <source>
    </source>
</evidence>
<evidence type="ECO:0000305" key="5"/>
<evidence type="ECO:0007829" key="6">
    <source>
        <dbReference type="PDB" id="1S4N"/>
    </source>
</evidence>
<feature type="chain" id="PRO_0000208241" description="Glycolipid 2-alpha-mannosyltransferase">
    <location>
        <begin position="1"/>
        <end position="442"/>
    </location>
</feature>
<feature type="topological domain" description="Cytoplasmic" evidence="1">
    <location>
        <begin position="1"/>
        <end position="11"/>
    </location>
</feature>
<feature type="transmembrane region" description="Helical; Signal-anchor for type II membrane protein">
    <location>
        <begin position="12"/>
        <end position="30"/>
    </location>
</feature>
<feature type="topological domain" description="Lumenal" evidence="1">
    <location>
        <begin position="31"/>
        <end position="442"/>
    </location>
</feature>
<feature type="region of interest" description="Stem region">
    <location>
        <begin position="31"/>
        <end position="118"/>
    </location>
</feature>
<feature type="region of interest" description="Disordered" evidence="2">
    <location>
        <begin position="68"/>
        <end position="95"/>
    </location>
</feature>
<feature type="region of interest" description="Catalytic">
    <location>
        <begin position="119"/>
        <end position="442"/>
    </location>
</feature>
<feature type="compositionally biased region" description="Basic and acidic residues" evidence="2">
    <location>
        <begin position="85"/>
        <end position="95"/>
    </location>
</feature>
<feature type="active site" description="Nucleophile" evidence="1">
    <location>
        <position position="329"/>
    </location>
</feature>
<feature type="glycosylation site" description="N-linked (GlcNAc...) asparagine" evidence="4">
    <location>
        <position position="197"/>
    </location>
</feature>
<feature type="helix" evidence="6">
    <location>
        <begin position="106"/>
        <end position="110"/>
    </location>
</feature>
<feature type="helix" evidence="6">
    <location>
        <begin position="111"/>
        <end position="113"/>
    </location>
</feature>
<feature type="strand" evidence="6">
    <location>
        <begin position="123"/>
        <end position="128"/>
    </location>
</feature>
<feature type="helix" evidence="6">
    <location>
        <begin position="131"/>
        <end position="133"/>
    </location>
</feature>
<feature type="helix" evidence="6">
    <location>
        <begin position="134"/>
        <end position="147"/>
    </location>
</feature>
<feature type="turn" evidence="6">
    <location>
        <begin position="148"/>
        <end position="151"/>
    </location>
</feature>
<feature type="strand" evidence="6">
    <location>
        <begin position="156"/>
        <end position="162"/>
    </location>
</feature>
<feature type="helix" evidence="6">
    <location>
        <begin position="166"/>
        <end position="175"/>
    </location>
</feature>
<feature type="strand" evidence="6">
    <location>
        <begin position="180"/>
        <end position="184"/>
    </location>
</feature>
<feature type="helix" evidence="6">
    <location>
        <begin position="187"/>
        <end position="189"/>
    </location>
</feature>
<feature type="helix" evidence="6">
    <location>
        <begin position="198"/>
        <end position="208"/>
    </location>
</feature>
<feature type="turn" evidence="6">
    <location>
        <begin position="209"/>
        <end position="211"/>
    </location>
</feature>
<feature type="turn" evidence="6">
    <location>
        <begin position="213"/>
        <end position="216"/>
    </location>
</feature>
<feature type="helix" evidence="6">
    <location>
        <begin position="218"/>
        <end position="229"/>
    </location>
</feature>
<feature type="helix" evidence="6">
    <location>
        <begin position="231"/>
        <end position="233"/>
    </location>
</feature>
<feature type="helix" evidence="6">
    <location>
        <begin position="235"/>
        <end position="237"/>
    </location>
</feature>
<feature type="strand" evidence="6">
    <location>
        <begin position="241"/>
        <end position="245"/>
    </location>
</feature>
<feature type="helix" evidence="6">
    <location>
        <begin position="260"/>
        <end position="266"/>
    </location>
</feature>
<feature type="strand" evidence="6">
    <location>
        <begin position="271"/>
        <end position="274"/>
    </location>
</feature>
<feature type="strand" evidence="6">
    <location>
        <begin position="276"/>
        <end position="278"/>
    </location>
</feature>
<feature type="helix" evidence="6">
    <location>
        <begin position="281"/>
        <end position="283"/>
    </location>
</feature>
<feature type="helix" evidence="6">
    <location>
        <begin position="287"/>
        <end position="297"/>
    </location>
</feature>
<feature type="helix" evidence="6">
    <location>
        <begin position="299"/>
        <end position="301"/>
    </location>
</feature>
<feature type="helix" evidence="6">
    <location>
        <begin position="308"/>
        <end position="311"/>
    </location>
</feature>
<feature type="strand" evidence="6">
    <location>
        <begin position="322"/>
        <end position="324"/>
    </location>
</feature>
<feature type="strand" evidence="6">
    <location>
        <begin position="328"/>
        <end position="332"/>
    </location>
</feature>
<feature type="helix" evidence="6">
    <location>
        <begin position="333"/>
        <end position="336"/>
    </location>
</feature>
<feature type="helix" evidence="6">
    <location>
        <begin position="339"/>
        <end position="351"/>
    </location>
</feature>
<feature type="helix" evidence="6">
    <location>
        <begin position="353"/>
        <end position="356"/>
    </location>
</feature>
<feature type="helix" evidence="6">
    <location>
        <begin position="361"/>
        <end position="372"/>
    </location>
</feature>
<feature type="helix" evidence="6">
    <location>
        <begin position="375"/>
        <end position="377"/>
    </location>
</feature>
<feature type="strand" evidence="6">
    <location>
        <begin position="378"/>
        <end position="380"/>
    </location>
</feature>
<feature type="strand" evidence="6">
    <location>
        <begin position="386"/>
        <end position="388"/>
    </location>
</feature>
<feature type="strand" evidence="6">
    <location>
        <begin position="391"/>
        <end position="393"/>
    </location>
</feature>
<feature type="helix" evidence="6">
    <location>
        <begin position="398"/>
        <end position="403"/>
    </location>
</feature>
<feature type="helix" evidence="6">
    <location>
        <begin position="410"/>
        <end position="412"/>
    </location>
</feature>
<feature type="helix" evidence="6">
    <location>
        <begin position="422"/>
        <end position="429"/>
    </location>
</feature>
<feature type="helix" evidence="6">
    <location>
        <begin position="437"/>
        <end position="441"/>
    </location>
</feature>
<comment type="function">
    <text>Mannosyltransferase that transfers an alpha-D-mannosyl residue from GDP-mannose into lipid-linked oligosaccharide, forming an alpha-(1-&gt;2)-D-mannosyl-D-mannose linkage. Required for the attachment of the third mannose residue of O-linked saccharides.</text>
</comment>
<comment type="cofactor">
    <cofactor>
        <name>Mn(2+)</name>
        <dbReference type="ChEBI" id="CHEBI:29035"/>
    </cofactor>
</comment>
<comment type="pathway">
    <text>Protein modification; protein glycosylation.</text>
</comment>
<comment type="subcellular location">
    <subcellularLocation>
        <location>Golgi apparatus membrane</location>
        <topology>Single-pass type II membrane protein</topology>
    </subcellularLocation>
</comment>
<comment type="miscellaneous">
    <text evidence="3">Present with 13000 molecules/cell in log phase SD medium.</text>
</comment>
<comment type="similarity">
    <text evidence="5">Belongs to the glycosyltransferase 15 family.</text>
</comment>